<protein>
    <recommendedName>
        <fullName>Transmembrane emp24 domain-containing protein p24delta10</fullName>
    </recommendedName>
    <alternativeName>
        <fullName>p24 family protein delta10</fullName>
        <shortName>p24delta10</shortName>
    </alternativeName>
    <alternativeName>
        <fullName>p24 family protein delta2d</fullName>
        <shortName>p24delta2d</shortName>
    </alternativeName>
</protein>
<name>P24DA_ARATH</name>
<dbReference type="EMBL" id="AC073178">
    <property type="protein sequence ID" value="AAG60114.1"/>
    <property type="status" value="ALT_INIT"/>
    <property type="molecule type" value="Genomic_DNA"/>
</dbReference>
<dbReference type="EMBL" id="CP002684">
    <property type="protein sequence ID" value="AEE34928.1"/>
    <property type="molecule type" value="Genomic_DNA"/>
</dbReference>
<dbReference type="EMBL" id="AF083711">
    <property type="protein sequence ID" value="AAN60269.1"/>
    <property type="status" value="ALT_INIT"/>
    <property type="molecule type" value="mRNA"/>
</dbReference>
<dbReference type="EMBL" id="AY072343">
    <property type="protein sequence ID" value="AAL61950.1"/>
    <property type="molecule type" value="mRNA"/>
</dbReference>
<dbReference type="EMBL" id="AY114598">
    <property type="protein sequence ID" value="AAM47917.1"/>
    <property type="molecule type" value="mRNA"/>
</dbReference>
<dbReference type="RefSeq" id="NP_177105.2">
    <property type="nucleotide sequence ID" value="NM_105613.5"/>
</dbReference>
<dbReference type="SMR" id="Q8VY92"/>
<dbReference type="BioGRID" id="28499">
    <property type="interactions" value="14"/>
</dbReference>
<dbReference type="FunCoup" id="Q8VY92">
    <property type="interactions" value="3869"/>
</dbReference>
<dbReference type="IntAct" id="Q8VY92">
    <property type="interactions" value="13"/>
</dbReference>
<dbReference type="STRING" id="3702.Q8VY92"/>
<dbReference type="GlyGen" id="Q8VY92">
    <property type="glycosylation" value="1 site"/>
</dbReference>
<dbReference type="PaxDb" id="3702-AT1G69460.1"/>
<dbReference type="ProteomicsDB" id="248684"/>
<dbReference type="EnsemblPlants" id="AT1G69460.1">
    <property type="protein sequence ID" value="AT1G69460.1"/>
    <property type="gene ID" value="AT1G69460"/>
</dbReference>
<dbReference type="GeneID" id="843278"/>
<dbReference type="Gramene" id="AT1G69460.1">
    <property type="protein sequence ID" value="AT1G69460.1"/>
    <property type="gene ID" value="AT1G69460"/>
</dbReference>
<dbReference type="KEGG" id="ath:AT1G69460"/>
<dbReference type="Araport" id="AT1G69460"/>
<dbReference type="TAIR" id="AT1G69460"/>
<dbReference type="eggNOG" id="KOG1691">
    <property type="taxonomic scope" value="Eukaryota"/>
</dbReference>
<dbReference type="HOGENOM" id="CLU_066963_3_2_1"/>
<dbReference type="InParanoid" id="Q8VY92"/>
<dbReference type="OMA" id="HYLCFQT"/>
<dbReference type="PhylomeDB" id="Q8VY92"/>
<dbReference type="PRO" id="PR:Q8VY92"/>
<dbReference type="Proteomes" id="UP000006548">
    <property type="component" value="Chromosome 1"/>
</dbReference>
<dbReference type="ExpressionAtlas" id="Q8VY92">
    <property type="expression patterns" value="baseline and differential"/>
</dbReference>
<dbReference type="GO" id="GO:0005783">
    <property type="term" value="C:endoplasmic reticulum"/>
    <property type="evidence" value="ECO:0007005"/>
    <property type="project" value="TAIR"/>
</dbReference>
<dbReference type="GO" id="GO:0005789">
    <property type="term" value="C:endoplasmic reticulum membrane"/>
    <property type="evidence" value="ECO:0007669"/>
    <property type="project" value="UniProtKB-SubCell"/>
</dbReference>
<dbReference type="GO" id="GO:0032580">
    <property type="term" value="C:Golgi cisterna membrane"/>
    <property type="evidence" value="ECO:0007669"/>
    <property type="project" value="UniProtKB-SubCell"/>
</dbReference>
<dbReference type="GO" id="GO:0015031">
    <property type="term" value="P:protein transport"/>
    <property type="evidence" value="ECO:0007669"/>
    <property type="project" value="UniProtKB-KW"/>
</dbReference>
<dbReference type="GO" id="GO:0016192">
    <property type="term" value="P:vesicle-mediated transport"/>
    <property type="evidence" value="ECO:0007669"/>
    <property type="project" value="UniProtKB-KW"/>
</dbReference>
<dbReference type="InterPro" id="IPR015720">
    <property type="entry name" value="Emp24-like"/>
</dbReference>
<dbReference type="InterPro" id="IPR009038">
    <property type="entry name" value="GOLD_dom"/>
</dbReference>
<dbReference type="PANTHER" id="PTHR22811">
    <property type="entry name" value="TRANSMEMBRANE EMP24 DOMAIN-CONTAINING PROTEIN"/>
    <property type="match status" value="1"/>
</dbReference>
<dbReference type="Pfam" id="PF01105">
    <property type="entry name" value="EMP24_GP25L"/>
    <property type="match status" value="1"/>
</dbReference>
<dbReference type="SMART" id="SM01190">
    <property type="entry name" value="EMP24_GP25L"/>
    <property type="match status" value="1"/>
</dbReference>
<dbReference type="PROSITE" id="PS50866">
    <property type="entry name" value="GOLD"/>
    <property type="match status" value="1"/>
</dbReference>
<gene>
    <name type="ordered locus">At1g69460</name>
    <name type="ORF">F10D13_26</name>
</gene>
<feature type="signal peptide" evidence="2">
    <location>
        <begin position="1"/>
        <end position="24"/>
    </location>
</feature>
<feature type="chain" id="PRO_0000419790" description="Transmembrane emp24 domain-containing protein p24delta10">
    <location>
        <begin position="25"/>
        <end position="214"/>
    </location>
</feature>
<feature type="topological domain" description="Lumenal" evidence="2">
    <location>
        <begin position="25"/>
        <end position="181"/>
    </location>
</feature>
<feature type="transmembrane region" description="Helical" evidence="2">
    <location>
        <begin position="182"/>
        <end position="202"/>
    </location>
</feature>
<feature type="topological domain" description="Cytoplasmic" evidence="2">
    <location>
        <begin position="203"/>
        <end position="214"/>
    </location>
</feature>
<feature type="domain" description="GOLD" evidence="3">
    <location>
        <begin position="34"/>
        <end position="149"/>
    </location>
</feature>
<feature type="coiled-coil region" evidence="2">
    <location>
        <begin position="164"/>
        <end position="177"/>
    </location>
</feature>
<feature type="short sequence motif" description="COPI vesicle coat-binding" evidence="1">
    <location>
        <begin position="207"/>
        <end position="214"/>
    </location>
</feature>
<feature type="short sequence motif" description="COPII vesicle coat-binding" evidence="1">
    <location>
        <begin position="207"/>
        <end position="208"/>
    </location>
</feature>
<feature type="modified residue" description="Omega-N-methylated arginine" evidence="1">
    <location>
        <position position="167"/>
    </location>
</feature>
<feature type="glycosylation site" description="N-linked (GlcNAc...) asparagine" evidence="2">
    <location>
        <position position="175"/>
    </location>
</feature>
<feature type="mutagenesis site" description="Does not affect the subcellular location." evidence="4">
    <original>F</original>
    <variation>Y</variation>
    <location>
        <position position="207"/>
    </location>
</feature>
<feature type="mutagenesis site" description="Redirection of the subcellular location to multivesicular body (MVB), the prevacuolar compartment (PVC) and the vacuole." evidence="4">
    <original>KK</original>
    <variation>SS</variation>
    <location>
        <begin position="211"/>
        <end position="212"/>
    </location>
</feature>
<organism>
    <name type="scientific">Arabidopsis thaliana</name>
    <name type="common">Mouse-ear cress</name>
    <dbReference type="NCBI Taxonomy" id="3702"/>
    <lineage>
        <taxon>Eukaryota</taxon>
        <taxon>Viridiplantae</taxon>
        <taxon>Streptophyta</taxon>
        <taxon>Embryophyta</taxon>
        <taxon>Tracheophyta</taxon>
        <taxon>Spermatophyta</taxon>
        <taxon>Magnoliopsida</taxon>
        <taxon>eudicotyledons</taxon>
        <taxon>Gunneridae</taxon>
        <taxon>Pentapetalae</taxon>
        <taxon>rosids</taxon>
        <taxon>malvids</taxon>
        <taxon>Brassicales</taxon>
        <taxon>Brassicaceae</taxon>
        <taxon>Camelineae</taxon>
        <taxon>Arabidopsis</taxon>
    </lineage>
</organism>
<comment type="function">
    <text evidence="1">Involved in vesicular protein trafficking. Mainly functions in the early secretory pathway. Thought to act as cargo receptor at the lumenal side for incorporation of secretory cargo molecules into transport vesicles and to be involved in vesicle coat formation at the cytoplasmic side (By similarity).</text>
</comment>
<comment type="subunit">
    <text evidence="1">Probably oligomerizes with other members of the EMP24/GP25L family. Associates with the COPI vesicle coat (coatomer). Associates with the COPII vesicle coat (coatomer).</text>
</comment>
<comment type="subcellular location">
    <subcellularLocation>
        <location evidence="4">Endoplasmic reticulum membrane</location>
        <topology evidence="4">Single-pass type I membrane protein</topology>
    </subcellularLocation>
    <subcellularLocation>
        <location evidence="4">Golgi apparatus</location>
        <location evidence="4">cis-Golgi network membrane</location>
        <topology evidence="4">Single-pass type I membrane protein</topology>
    </subcellularLocation>
    <subcellularLocation>
        <location evidence="4">Golgi apparatus</location>
        <location evidence="4">Golgi stack membrane</location>
        <topology evidence="4">Single-pass type I membrane protein</topology>
    </subcellularLocation>
    <text>Cycles between the endoplasmic reticulum and Golgi via COPI and COPII dependent pathways.</text>
</comment>
<comment type="domain">
    <text>The cytoplasmic C-terminal domain contains a functional dilysine-retrieval motif, which is involved in the retrograde Golgi-to-ER transport of the protein.</text>
</comment>
<comment type="miscellaneous">
    <text>The lumenal coiled-coil domain is required for the Golgi subcellular location.</text>
</comment>
<comment type="similarity">
    <text evidence="5">Belongs to the EMP24/GP25L family.</text>
</comment>
<comment type="sequence caution" evidence="5">
    <conflict type="erroneous initiation">
        <sequence resource="EMBL-CDS" id="AAG60114"/>
    </conflict>
    <text>Truncated N-terminus.</text>
</comment>
<comment type="sequence caution" evidence="5">
    <conflict type="erroneous initiation">
        <sequence resource="EMBL-CDS" id="AAN60269"/>
    </conflict>
    <text>Truncated N-terminus.</text>
</comment>
<accession>Q8VY92</accession>
<accession>Q9C791</accession>
<proteinExistence type="evidence at protein level"/>
<sequence>MFLQSQKLWTMLLILAIWSPISHSLHFDLHSGRTKCIAEDIKSNSMTVGKYNIDNPHEGQALPQTHKISVKVTSNSGNNYHHAEQVDSGQFAFSAVEAGDYMACFTAVDHKPEVSLSIDFEWKTGVQSKSWANVAKKSQVEVMEFEVKSLLDTVNSIHEEMYYLRDREEEMQDLNRSTNTKMAWLSVLSFFVCIGVAGMQFLHLKTFFEKKKVI</sequence>
<reference key="1">
    <citation type="journal article" date="2000" name="Nature">
        <title>Sequence and analysis of chromosome 1 of the plant Arabidopsis thaliana.</title>
        <authorList>
            <person name="Theologis A."/>
            <person name="Ecker J.R."/>
            <person name="Palm C.J."/>
            <person name="Federspiel N.A."/>
            <person name="Kaul S."/>
            <person name="White O."/>
            <person name="Alonso J."/>
            <person name="Altafi H."/>
            <person name="Araujo R."/>
            <person name="Bowman C.L."/>
            <person name="Brooks S.Y."/>
            <person name="Buehler E."/>
            <person name="Chan A."/>
            <person name="Chao Q."/>
            <person name="Chen H."/>
            <person name="Cheuk R.F."/>
            <person name="Chin C.W."/>
            <person name="Chung M.K."/>
            <person name="Conn L."/>
            <person name="Conway A.B."/>
            <person name="Conway A.R."/>
            <person name="Creasy T.H."/>
            <person name="Dewar K."/>
            <person name="Dunn P."/>
            <person name="Etgu P."/>
            <person name="Feldblyum T.V."/>
            <person name="Feng J.-D."/>
            <person name="Fong B."/>
            <person name="Fujii C.Y."/>
            <person name="Gill J.E."/>
            <person name="Goldsmith A.D."/>
            <person name="Haas B."/>
            <person name="Hansen N.F."/>
            <person name="Hughes B."/>
            <person name="Huizar L."/>
            <person name="Hunter J.L."/>
            <person name="Jenkins J."/>
            <person name="Johnson-Hopson C."/>
            <person name="Khan S."/>
            <person name="Khaykin E."/>
            <person name="Kim C.J."/>
            <person name="Koo H.L."/>
            <person name="Kremenetskaia I."/>
            <person name="Kurtz D.B."/>
            <person name="Kwan A."/>
            <person name="Lam B."/>
            <person name="Langin-Hooper S."/>
            <person name="Lee A."/>
            <person name="Lee J.M."/>
            <person name="Lenz C.A."/>
            <person name="Li J.H."/>
            <person name="Li Y.-P."/>
            <person name="Lin X."/>
            <person name="Liu S.X."/>
            <person name="Liu Z.A."/>
            <person name="Luros J.S."/>
            <person name="Maiti R."/>
            <person name="Marziali A."/>
            <person name="Militscher J."/>
            <person name="Miranda M."/>
            <person name="Nguyen M."/>
            <person name="Nierman W.C."/>
            <person name="Osborne B.I."/>
            <person name="Pai G."/>
            <person name="Peterson J."/>
            <person name="Pham P.K."/>
            <person name="Rizzo M."/>
            <person name="Rooney T."/>
            <person name="Rowley D."/>
            <person name="Sakano H."/>
            <person name="Salzberg S.L."/>
            <person name="Schwartz J.R."/>
            <person name="Shinn P."/>
            <person name="Southwick A.M."/>
            <person name="Sun H."/>
            <person name="Tallon L.J."/>
            <person name="Tambunga G."/>
            <person name="Toriumi M.J."/>
            <person name="Town C.D."/>
            <person name="Utterback T."/>
            <person name="Van Aken S."/>
            <person name="Vaysberg M."/>
            <person name="Vysotskaia V.S."/>
            <person name="Walker M."/>
            <person name="Wu D."/>
            <person name="Yu G."/>
            <person name="Fraser C.M."/>
            <person name="Venter J.C."/>
            <person name="Davis R.W."/>
        </authorList>
    </citation>
    <scope>NUCLEOTIDE SEQUENCE [LARGE SCALE GENOMIC DNA]</scope>
    <source>
        <strain>cv. Columbia</strain>
    </source>
</reference>
<reference key="2">
    <citation type="journal article" date="2017" name="Plant J.">
        <title>Araport11: a complete reannotation of the Arabidopsis thaliana reference genome.</title>
        <authorList>
            <person name="Cheng C.Y."/>
            <person name="Krishnakumar V."/>
            <person name="Chan A.P."/>
            <person name="Thibaud-Nissen F."/>
            <person name="Schobel S."/>
            <person name="Town C.D."/>
        </authorList>
    </citation>
    <scope>GENOME REANNOTATION</scope>
    <source>
        <strain>cv. Columbia</strain>
    </source>
</reference>
<reference key="3">
    <citation type="submission" date="1998-08" db="EMBL/GenBank/DDBJ databases">
        <title>Signal peptide selection derived cDNAs from Arabidopsis thaliana leaves and guard cells.</title>
        <authorList>
            <person name="Stracke R."/>
            <person name="Palme K."/>
        </authorList>
    </citation>
    <scope>NUCLEOTIDE SEQUENCE [LARGE SCALE MRNA]</scope>
</reference>
<reference key="4">
    <citation type="journal article" date="2003" name="Science">
        <title>Empirical analysis of transcriptional activity in the Arabidopsis genome.</title>
        <authorList>
            <person name="Yamada K."/>
            <person name="Lim J."/>
            <person name="Dale J.M."/>
            <person name="Chen H."/>
            <person name="Shinn P."/>
            <person name="Palm C.J."/>
            <person name="Southwick A.M."/>
            <person name="Wu H.C."/>
            <person name="Kim C.J."/>
            <person name="Nguyen M."/>
            <person name="Pham P.K."/>
            <person name="Cheuk R.F."/>
            <person name="Karlin-Newmann G."/>
            <person name="Liu S.X."/>
            <person name="Lam B."/>
            <person name="Sakano H."/>
            <person name="Wu T."/>
            <person name="Yu G."/>
            <person name="Miranda M."/>
            <person name="Quach H.L."/>
            <person name="Tripp M."/>
            <person name="Chang C.H."/>
            <person name="Lee J.M."/>
            <person name="Toriumi M.J."/>
            <person name="Chan M.M."/>
            <person name="Tang C.C."/>
            <person name="Onodera C.S."/>
            <person name="Deng J.M."/>
            <person name="Akiyama K."/>
            <person name="Ansari Y."/>
            <person name="Arakawa T."/>
            <person name="Banh J."/>
            <person name="Banno F."/>
            <person name="Bowser L."/>
            <person name="Brooks S.Y."/>
            <person name="Carninci P."/>
            <person name="Chao Q."/>
            <person name="Choy N."/>
            <person name="Enju A."/>
            <person name="Goldsmith A.D."/>
            <person name="Gurjal M."/>
            <person name="Hansen N.F."/>
            <person name="Hayashizaki Y."/>
            <person name="Johnson-Hopson C."/>
            <person name="Hsuan V.W."/>
            <person name="Iida K."/>
            <person name="Karnes M."/>
            <person name="Khan S."/>
            <person name="Koesema E."/>
            <person name="Ishida J."/>
            <person name="Jiang P.X."/>
            <person name="Jones T."/>
            <person name="Kawai J."/>
            <person name="Kamiya A."/>
            <person name="Meyers C."/>
            <person name="Nakajima M."/>
            <person name="Narusaka M."/>
            <person name="Seki M."/>
            <person name="Sakurai T."/>
            <person name="Satou M."/>
            <person name="Tamse R."/>
            <person name="Vaysberg M."/>
            <person name="Wallender E.K."/>
            <person name="Wong C."/>
            <person name="Yamamura Y."/>
            <person name="Yuan S."/>
            <person name="Shinozaki K."/>
            <person name="Davis R.W."/>
            <person name="Theologis A."/>
            <person name="Ecker J.R."/>
        </authorList>
    </citation>
    <scope>NUCLEOTIDE SEQUENCE [LARGE SCALE MRNA]</scope>
    <source>
        <strain>cv. Columbia</strain>
    </source>
</reference>
<reference key="5">
    <citation type="journal article" date="2012" name="J. Exp. Bot.">
        <title>Coupled transport of Arabidopsis p24 proteins at the ER-Golgi interface.</title>
        <authorList>
            <person name="Montesinos J.C."/>
            <person name="Sturm S."/>
            <person name="Langhans M."/>
            <person name="Hillmer S."/>
            <person name="Marcote M.J."/>
            <person name="Robinson D.G."/>
            <person name="Aniento F."/>
        </authorList>
    </citation>
    <scope>GENE FAMILY</scope>
    <scope>NOMENCLATURE</scope>
</reference>
<reference key="6">
    <citation type="journal article" date="2012" name="Traffic">
        <title>Subclass-specific localization and trafficking of Arabidopsis p24 proteins in the ER-Golgi interface.</title>
        <authorList>
            <person name="Chen J."/>
            <person name="Qi X."/>
            <person name="Zheng H."/>
        </authorList>
    </citation>
    <scope>GENE FAMILY</scope>
    <scope>SUBCELLULAR LOCATION</scope>
    <scope>MUTAGENESIS OF PHE-207 AND 211-LYS-LYS-212</scope>
    <scope>SUBUNIT</scope>
    <scope>COILED-COIL DOMAIN</scope>
</reference>
<evidence type="ECO:0000250" key="1"/>
<evidence type="ECO:0000255" key="2"/>
<evidence type="ECO:0000255" key="3">
    <source>
        <dbReference type="PROSITE-ProRule" id="PRU00096"/>
    </source>
</evidence>
<evidence type="ECO:0000269" key="4">
    <source>
    </source>
</evidence>
<evidence type="ECO:0000305" key="5"/>
<keyword id="KW-0175">Coiled coil</keyword>
<keyword id="KW-0256">Endoplasmic reticulum</keyword>
<keyword id="KW-0931">ER-Golgi transport</keyword>
<keyword id="KW-0325">Glycoprotein</keyword>
<keyword id="KW-0333">Golgi apparatus</keyword>
<keyword id="KW-0472">Membrane</keyword>
<keyword id="KW-0488">Methylation</keyword>
<keyword id="KW-0653">Protein transport</keyword>
<keyword id="KW-1185">Reference proteome</keyword>
<keyword id="KW-0732">Signal</keyword>
<keyword id="KW-0812">Transmembrane</keyword>
<keyword id="KW-1133">Transmembrane helix</keyword>
<keyword id="KW-0813">Transport</keyword>